<organism>
    <name type="scientific">Pseudoalteromonas atlantica (strain T6c / ATCC BAA-1087)</name>
    <dbReference type="NCBI Taxonomy" id="3042615"/>
    <lineage>
        <taxon>Bacteria</taxon>
        <taxon>Pseudomonadati</taxon>
        <taxon>Pseudomonadota</taxon>
        <taxon>Gammaproteobacteria</taxon>
        <taxon>Alteromonadales</taxon>
        <taxon>Alteromonadaceae</taxon>
        <taxon>Paraglaciecola</taxon>
    </lineage>
</organism>
<accession>Q15ZP6</accession>
<gene>
    <name evidence="1" type="primary">slyX</name>
    <name type="ordered locus">Patl_0110</name>
</gene>
<feature type="chain" id="PRO_1000045723" description="Protein SlyX homolog">
    <location>
        <begin position="1"/>
        <end position="70"/>
    </location>
</feature>
<evidence type="ECO:0000255" key="1">
    <source>
        <dbReference type="HAMAP-Rule" id="MF_00715"/>
    </source>
</evidence>
<reference key="1">
    <citation type="submission" date="2006-06" db="EMBL/GenBank/DDBJ databases">
        <title>Complete sequence of Pseudoalteromonas atlantica T6c.</title>
        <authorList>
            <consortium name="US DOE Joint Genome Institute"/>
            <person name="Copeland A."/>
            <person name="Lucas S."/>
            <person name="Lapidus A."/>
            <person name="Barry K."/>
            <person name="Detter J.C."/>
            <person name="Glavina del Rio T."/>
            <person name="Hammon N."/>
            <person name="Israni S."/>
            <person name="Dalin E."/>
            <person name="Tice H."/>
            <person name="Pitluck S."/>
            <person name="Saunders E."/>
            <person name="Brettin T."/>
            <person name="Bruce D."/>
            <person name="Han C."/>
            <person name="Tapia R."/>
            <person name="Gilna P."/>
            <person name="Schmutz J."/>
            <person name="Larimer F."/>
            <person name="Land M."/>
            <person name="Hauser L."/>
            <person name="Kyrpides N."/>
            <person name="Kim E."/>
            <person name="Karls A.C."/>
            <person name="Bartlett D."/>
            <person name="Higgins B.P."/>
            <person name="Richardson P."/>
        </authorList>
    </citation>
    <scope>NUCLEOTIDE SEQUENCE [LARGE SCALE GENOMIC DNA]</scope>
    <source>
        <strain>T6c / ATCC BAA-1087</strain>
    </source>
</reference>
<dbReference type="EMBL" id="CP000388">
    <property type="protein sequence ID" value="ABG38642.1"/>
    <property type="molecule type" value="Genomic_DNA"/>
</dbReference>
<dbReference type="RefSeq" id="WP_006993524.1">
    <property type="nucleotide sequence ID" value="NC_008228.1"/>
</dbReference>
<dbReference type="SMR" id="Q15ZP6"/>
<dbReference type="STRING" id="342610.Patl_0110"/>
<dbReference type="KEGG" id="pat:Patl_0110"/>
<dbReference type="eggNOG" id="COG2900">
    <property type="taxonomic scope" value="Bacteria"/>
</dbReference>
<dbReference type="HOGENOM" id="CLU_180796_4_0_6"/>
<dbReference type="OrthoDB" id="5771733at2"/>
<dbReference type="Proteomes" id="UP000001981">
    <property type="component" value="Chromosome"/>
</dbReference>
<dbReference type="Gene3D" id="1.20.5.300">
    <property type="match status" value="1"/>
</dbReference>
<dbReference type="HAMAP" id="MF_00715">
    <property type="entry name" value="SlyX"/>
    <property type="match status" value="1"/>
</dbReference>
<dbReference type="InterPro" id="IPR007236">
    <property type="entry name" value="SlyX"/>
</dbReference>
<dbReference type="PANTHER" id="PTHR36508">
    <property type="entry name" value="PROTEIN SLYX"/>
    <property type="match status" value="1"/>
</dbReference>
<dbReference type="PANTHER" id="PTHR36508:SF1">
    <property type="entry name" value="PROTEIN SLYX"/>
    <property type="match status" value="1"/>
</dbReference>
<dbReference type="Pfam" id="PF04102">
    <property type="entry name" value="SlyX"/>
    <property type="match status" value="1"/>
</dbReference>
<comment type="similarity">
    <text evidence="1">Belongs to the SlyX family.</text>
</comment>
<proteinExistence type="inferred from homology"/>
<protein>
    <recommendedName>
        <fullName evidence="1">Protein SlyX homolog</fullName>
    </recommendedName>
</protein>
<sequence length="70" mass="8136">MQHIEADIEQLQMKVAFQEDTIEELNKALIKQQKQLELLEFQLSHVINKVKEIDVPSGDSQEVEPPPPHY</sequence>
<name>SLYX_PSEA6</name>